<comment type="function">
    <text>Essential for the control of the cell cycle at the G2/M (mitosis) transition.</text>
</comment>
<comment type="subunit">
    <text evidence="2 3">Interacts with the CDC2 protein kinase to form a serine/threonine kinase holoenzyme complex also known as maturation promoting factor (MPF). The cyclin subunit imparts substrate specificity to the complex. Binds HEI10. Interacts with catalytically active RALBP1 and CDC2 during mitosis to form an endocytotic complex during interphase. Interacts with CCNF; interaction is required for nuclear localization. Interacts with CDK5RAP3. Interacts with RFPL4A and UBE2A. Interacts with INCA1.</text>
</comment>
<comment type="subcellular location">
    <subcellularLocation>
        <location>Cytoplasm</location>
    </subcellularLocation>
    <subcellularLocation>
        <location>Nucleus</location>
    </subcellularLocation>
    <subcellularLocation>
        <location evidence="1">Cytoplasm</location>
        <location evidence="1">Cytoskeleton</location>
        <location evidence="1">Microtubule organizing center</location>
        <location evidence="1">Centrosome</location>
    </subcellularLocation>
</comment>
<comment type="developmental stage">
    <text>Accumulates steadily during G2 and is abruptly destroyed at mitosis.</text>
</comment>
<comment type="PTM">
    <text evidence="1">Ubiquitinated by the SCF(NIPA) complex during interphase, leading to its destruction. Not ubiquitinated during G2/M phases (By similarity).</text>
</comment>
<comment type="PTM">
    <text evidence="1">Phosphorylated by PLK1 at Ser-129 on centrosomes during prophase: phosphorylation by PLK1 does not cause nuclear import. Phosphorylation at Ser-143 was also reported to be mediated by PLK1 but Ser-129 seems to be the primary phosphorylation site (By similarity).</text>
</comment>
<comment type="similarity">
    <text evidence="5">Belongs to the cyclin family. Cyclin AB subfamily.</text>
</comment>
<dbReference type="EMBL" id="D17293">
    <property type="protein sequence ID" value="BAA04126.1"/>
    <property type="molecule type" value="mRNA"/>
</dbReference>
<dbReference type="RefSeq" id="NP_001297493.1">
    <property type="nucleotide sequence ID" value="NM_001310564.1"/>
</dbReference>
<dbReference type="SMR" id="P37882"/>
<dbReference type="STRING" id="10036.ENSMAUP00000002117"/>
<dbReference type="GeneID" id="101836169"/>
<dbReference type="KEGG" id="maua:101836169"/>
<dbReference type="CTD" id="891"/>
<dbReference type="eggNOG" id="KOG0653">
    <property type="taxonomic scope" value="Eukaryota"/>
</dbReference>
<dbReference type="OrthoDB" id="5590282at2759"/>
<dbReference type="Proteomes" id="UP000189706">
    <property type="component" value="Unplaced"/>
</dbReference>
<dbReference type="GO" id="GO:0005813">
    <property type="term" value="C:centrosome"/>
    <property type="evidence" value="ECO:0000250"/>
    <property type="project" value="UniProtKB"/>
</dbReference>
<dbReference type="GO" id="GO:0005737">
    <property type="term" value="C:cytoplasm"/>
    <property type="evidence" value="ECO:0000250"/>
    <property type="project" value="UniProtKB"/>
</dbReference>
<dbReference type="GO" id="GO:0005634">
    <property type="term" value="C:nucleus"/>
    <property type="evidence" value="ECO:0000250"/>
    <property type="project" value="UniProtKB"/>
</dbReference>
<dbReference type="GO" id="GO:0016538">
    <property type="term" value="F:cyclin-dependent protein serine/threonine kinase regulator activity"/>
    <property type="evidence" value="ECO:0007669"/>
    <property type="project" value="InterPro"/>
</dbReference>
<dbReference type="GO" id="GO:0051301">
    <property type="term" value="P:cell division"/>
    <property type="evidence" value="ECO:0007669"/>
    <property type="project" value="UniProtKB-KW"/>
</dbReference>
<dbReference type="GO" id="GO:0044772">
    <property type="term" value="P:mitotic cell cycle phase transition"/>
    <property type="evidence" value="ECO:0007669"/>
    <property type="project" value="InterPro"/>
</dbReference>
<dbReference type="CDD" id="cd20565">
    <property type="entry name" value="CYCLIN_CCNB1_rpt1"/>
    <property type="match status" value="1"/>
</dbReference>
<dbReference type="FunFam" id="1.10.472.10:FF:000198">
    <property type="entry name" value="G2/mitotic-specific cyclin-B1"/>
    <property type="match status" value="1"/>
</dbReference>
<dbReference type="Gene3D" id="1.10.472.10">
    <property type="entry name" value="Cyclin-like"/>
    <property type="match status" value="2"/>
</dbReference>
<dbReference type="InterPro" id="IPR048026">
    <property type="entry name" value="CCNB1_first_cyclin-box"/>
</dbReference>
<dbReference type="InterPro" id="IPR039361">
    <property type="entry name" value="Cyclin"/>
</dbReference>
<dbReference type="InterPro" id="IPR013763">
    <property type="entry name" value="Cyclin-like_dom"/>
</dbReference>
<dbReference type="InterPro" id="IPR036915">
    <property type="entry name" value="Cyclin-like_sf"/>
</dbReference>
<dbReference type="InterPro" id="IPR046965">
    <property type="entry name" value="Cyclin_A/B-like"/>
</dbReference>
<dbReference type="InterPro" id="IPR004367">
    <property type="entry name" value="Cyclin_C-dom"/>
</dbReference>
<dbReference type="InterPro" id="IPR006671">
    <property type="entry name" value="Cyclin_N"/>
</dbReference>
<dbReference type="InterPro" id="IPR048258">
    <property type="entry name" value="Cyclins_cyclin-box"/>
</dbReference>
<dbReference type="PANTHER" id="PTHR10177">
    <property type="entry name" value="CYCLINS"/>
    <property type="match status" value="1"/>
</dbReference>
<dbReference type="Pfam" id="PF02984">
    <property type="entry name" value="Cyclin_C"/>
    <property type="match status" value="1"/>
</dbReference>
<dbReference type="Pfam" id="PF00134">
    <property type="entry name" value="Cyclin_N"/>
    <property type="match status" value="1"/>
</dbReference>
<dbReference type="PIRSF" id="PIRSF001771">
    <property type="entry name" value="Cyclin_A_B_D_E"/>
    <property type="match status" value="1"/>
</dbReference>
<dbReference type="SMART" id="SM00385">
    <property type="entry name" value="CYCLIN"/>
    <property type="match status" value="2"/>
</dbReference>
<dbReference type="SMART" id="SM01332">
    <property type="entry name" value="Cyclin_C"/>
    <property type="match status" value="1"/>
</dbReference>
<dbReference type="SUPFAM" id="SSF47954">
    <property type="entry name" value="Cyclin-like"/>
    <property type="match status" value="2"/>
</dbReference>
<dbReference type="PROSITE" id="PS00292">
    <property type="entry name" value="CYCLINS"/>
    <property type="match status" value="1"/>
</dbReference>
<protein>
    <recommendedName>
        <fullName>G2/mitotic-specific cyclin-B1</fullName>
    </recommendedName>
</protein>
<gene>
    <name type="primary">CCNB1</name>
</gene>
<feature type="chain" id="PRO_0000080351" description="G2/mitotic-specific cyclin-B1">
    <location>
        <begin position="1"/>
        <end position="429"/>
    </location>
</feature>
<feature type="region of interest" description="Disordered" evidence="4">
    <location>
        <begin position="71"/>
        <end position="114"/>
    </location>
</feature>
<feature type="region of interest" description="Interaction with CDK2" evidence="1">
    <location>
        <begin position="165"/>
        <end position="173"/>
    </location>
</feature>
<feature type="region of interest" description="Interaction with CDK2" evidence="1">
    <location>
        <begin position="254"/>
        <end position="257"/>
    </location>
</feature>
<feature type="compositionally biased region" description="Basic and acidic residues" evidence="4">
    <location>
        <begin position="98"/>
        <end position="112"/>
    </location>
</feature>
<feature type="modified residue" description="N6-acetyllysine" evidence="2">
    <location>
        <position position="73"/>
    </location>
</feature>
<feature type="modified residue" description="Phosphoserine; by CDK1" evidence="2">
    <location>
        <position position="122"/>
    </location>
</feature>
<feature type="modified residue" description="Phosphoserine" evidence="2">
    <location>
        <position position="124"/>
    </location>
</feature>
<feature type="modified residue" description="Phosphoserine; by PLK1" evidence="2">
    <location>
        <position position="129"/>
    </location>
</feature>
<feature type="modified residue" description="Phosphoserine" evidence="2">
    <location>
        <position position="143"/>
    </location>
</feature>
<feature type="modified residue" description="Phosphothreonine" evidence="2">
    <location>
        <position position="317"/>
    </location>
</feature>
<organism>
    <name type="scientific">Mesocricetus auratus</name>
    <name type="common">Golden hamster</name>
    <dbReference type="NCBI Taxonomy" id="10036"/>
    <lineage>
        <taxon>Eukaryota</taxon>
        <taxon>Metazoa</taxon>
        <taxon>Chordata</taxon>
        <taxon>Craniata</taxon>
        <taxon>Vertebrata</taxon>
        <taxon>Euteleostomi</taxon>
        <taxon>Mammalia</taxon>
        <taxon>Eutheria</taxon>
        <taxon>Euarchontoglires</taxon>
        <taxon>Glires</taxon>
        <taxon>Rodentia</taxon>
        <taxon>Myomorpha</taxon>
        <taxon>Muroidea</taxon>
        <taxon>Cricetidae</taxon>
        <taxon>Cricetinae</taxon>
        <taxon>Mesocricetus</taxon>
    </lineage>
</organism>
<evidence type="ECO:0000250" key="1"/>
<evidence type="ECO:0000250" key="2">
    <source>
        <dbReference type="UniProtKB" id="P14635"/>
    </source>
</evidence>
<evidence type="ECO:0000250" key="3">
    <source>
        <dbReference type="UniProtKB" id="P24860"/>
    </source>
</evidence>
<evidence type="ECO:0000256" key="4">
    <source>
        <dbReference type="SAM" id="MobiDB-lite"/>
    </source>
</evidence>
<evidence type="ECO:0000305" key="5"/>
<keyword id="KW-0007">Acetylation</keyword>
<keyword id="KW-0131">Cell cycle</keyword>
<keyword id="KW-0132">Cell division</keyword>
<keyword id="KW-0195">Cyclin</keyword>
<keyword id="KW-0963">Cytoplasm</keyword>
<keyword id="KW-0206">Cytoskeleton</keyword>
<keyword id="KW-0498">Mitosis</keyword>
<keyword id="KW-0539">Nucleus</keyword>
<keyword id="KW-0597">Phosphoprotein</keyword>
<keyword id="KW-1185">Reference proteome</keyword>
<keyword id="KW-0832">Ubl conjugation</keyword>
<accession>P37882</accession>
<sequence length="429" mass="47901">MALRVTRNTKLNTENKAKVSMAGAKAVPVTLAAASKPGLRPRTALGDIGNKVSEQAQARLPLKKELKTSVTGKVSAKIPPPKPLEKVPPVSEPEVELAETHEPEPVMDEKLSPEPILVDNPSPSPMETSGCAPAEEYLCQAFSDVILAVSDVDADDGADPNLCSEYVKDIYAYLRQLEEEQSVRPKYLLGREVTGNMRAILIDWLIQVQMKFRLLQETMYMTVSIIDRFMQDNCVPKKMLQLVGVTAMFIASKYEEMYPPEIGDFAFVTNNTYTKHQIRQMEMKILRVLNFSLGRPLPLHFLRRTSKIGEVDVEQHTLAKYLMELTLLDYDMVDFAPSQIAAGAFCLALKILDNGEWTPTLQHYLSYTEESLLPVMQHLAKNVVMVNHGLTKHMTIKNKYATSKHAKISTLAQLNCTLVQNLSKAVAKA</sequence>
<proteinExistence type="evidence at transcript level"/>
<name>CCNB1_MESAU</name>
<reference key="1">
    <citation type="submission" date="1993-07" db="EMBL/GenBank/DDBJ databases">
        <title>Nucleotide sequence of hamster cyclin B1 and B2 cDNA.</title>
        <authorList>
            <person name="Shiraki T."/>
            <person name="Yamashita K."/>
            <person name="Nishitani H."/>
            <person name="Nishimoto T."/>
        </authorList>
    </citation>
    <scope>NUCLEOTIDE SEQUENCE [MRNA]</scope>
</reference>